<protein>
    <recommendedName>
        <fullName evidence="1">A-type ATP synthase subunit A</fullName>
        <ecNumber evidence="1">7.1.2.2</ecNumber>
    </recommendedName>
</protein>
<name>AATA_METST</name>
<proteinExistence type="inferred from homology"/>
<evidence type="ECO:0000255" key="1">
    <source>
        <dbReference type="HAMAP-Rule" id="MF_00309"/>
    </source>
</evidence>
<organism>
    <name type="scientific">Methanosphaera stadtmanae (strain ATCC 43021 / DSM 3091 / JCM 11832 / MCB-3)</name>
    <dbReference type="NCBI Taxonomy" id="339860"/>
    <lineage>
        <taxon>Archaea</taxon>
        <taxon>Methanobacteriati</taxon>
        <taxon>Methanobacteriota</taxon>
        <taxon>Methanomada group</taxon>
        <taxon>Methanobacteria</taxon>
        <taxon>Methanobacteriales</taxon>
        <taxon>Methanobacteriaceae</taxon>
        <taxon>Methanosphaera</taxon>
    </lineage>
</organism>
<sequence>MITGNIIKIAGPVIIGDGMRGTQIHEMVRVGDIGLIGEIIELEGDTATVQVYEETAGIKPGEKIESTGGPLSVELGPGILKSIYDGIQRPLDEIKSVSGDFIPRGIDVPALDKVKEWEFKPTASVGDKVNGGDIIGTVDETSAIVHKIMIPPKMSGTIKSIVSQGKYNVTEDIAEVETENGIETVQMMQVWPVRVGRPYTNKLDPDVPLITGQRAQDTFFCVAKGGTSAMPGPFGSGKTVTQQQLAKWADADIVVYIGCGERGNEMTEVLTEFPELEDPKTGNPLMDRTVLIANTSNMPVAAREACVYTGITIAEYFRDMGYDVALMADSTSRWAEAMRELSGRLEEMPGEEGYPAYLASRLAQFYERAGRVTTIGSHKAEASVTVVGAVSPPGGDLSEPVTQNTLRIAKVFWALDASLADRRHFPSINWLNSYSLYVDSITNWWNSQIGSDWRDLRNTAMALLQKESELNEIVQLVGPDALPQKDRVTLESARMLREDFLQQNAFDDTDTYCSPSKQYNMLKTILLYNTTAQSALADGADINKLVNLDVRVDLGKMKYIPEDEFEAKVEDIRNRITKECNEAGQ</sequence>
<reference key="1">
    <citation type="journal article" date="2006" name="J. Bacteriol.">
        <title>The genome sequence of Methanosphaera stadtmanae reveals why this human intestinal archaeon is restricted to methanol and H2 for methane formation and ATP synthesis.</title>
        <authorList>
            <person name="Fricke W.F."/>
            <person name="Seedorf H."/>
            <person name="Henne A."/>
            <person name="Kruer M."/>
            <person name="Liesegang H."/>
            <person name="Hedderich R."/>
            <person name="Gottschalk G."/>
            <person name="Thauer R.K."/>
        </authorList>
    </citation>
    <scope>NUCLEOTIDE SEQUENCE [LARGE SCALE GENOMIC DNA]</scope>
    <source>
        <strain>ATCC 43021 / DSM 3091 / JCM 11832 / MCB-3</strain>
    </source>
</reference>
<keyword id="KW-0066">ATP synthesis</keyword>
<keyword id="KW-0067">ATP-binding</keyword>
<keyword id="KW-1003">Cell membrane</keyword>
<keyword id="KW-0375">Hydrogen ion transport</keyword>
<keyword id="KW-0406">Ion transport</keyword>
<keyword id="KW-0472">Membrane</keyword>
<keyword id="KW-0547">Nucleotide-binding</keyword>
<keyword id="KW-1185">Reference proteome</keyword>
<keyword id="KW-1278">Translocase</keyword>
<keyword id="KW-0813">Transport</keyword>
<accession>Q2NF87</accession>
<comment type="function">
    <text evidence="1">Component of the A-type ATP synthase that produces ATP from ADP in the presence of a proton gradient across the membrane. The A chain is the catalytic subunit.</text>
</comment>
<comment type="catalytic activity">
    <reaction evidence="1">
        <text>ATP + H2O + 4 H(+)(in) = ADP + phosphate + 5 H(+)(out)</text>
        <dbReference type="Rhea" id="RHEA:57720"/>
        <dbReference type="ChEBI" id="CHEBI:15377"/>
        <dbReference type="ChEBI" id="CHEBI:15378"/>
        <dbReference type="ChEBI" id="CHEBI:30616"/>
        <dbReference type="ChEBI" id="CHEBI:43474"/>
        <dbReference type="ChEBI" id="CHEBI:456216"/>
        <dbReference type="EC" id="7.1.2.2"/>
    </reaction>
</comment>
<comment type="subunit">
    <text evidence="1">Has multiple subunits with at least A(3), B(3), C, D, E, F, H, I and proteolipid K(x).</text>
</comment>
<comment type="subcellular location">
    <subcellularLocation>
        <location evidence="1">Cell membrane</location>
        <topology evidence="1">Peripheral membrane protein</topology>
    </subcellularLocation>
</comment>
<comment type="similarity">
    <text evidence="1">Belongs to the ATPase alpha/beta chains family.</text>
</comment>
<gene>
    <name evidence="1" type="primary">atpA</name>
    <name type="ordered locus">Msp_1135</name>
</gene>
<dbReference type="EC" id="7.1.2.2" evidence="1"/>
<dbReference type="EMBL" id="CP000102">
    <property type="protein sequence ID" value="ABC57516.1"/>
    <property type="molecule type" value="Genomic_DNA"/>
</dbReference>
<dbReference type="RefSeq" id="WP_011406715.1">
    <property type="nucleotide sequence ID" value="NC_007681.1"/>
</dbReference>
<dbReference type="SMR" id="Q2NF87"/>
<dbReference type="STRING" id="339860.Msp_1135"/>
<dbReference type="KEGG" id="mst:Msp_1135"/>
<dbReference type="eggNOG" id="arCOG00868">
    <property type="taxonomic scope" value="Archaea"/>
</dbReference>
<dbReference type="HOGENOM" id="CLU_008162_3_1_2"/>
<dbReference type="OrthoDB" id="115235at2157"/>
<dbReference type="Proteomes" id="UP000001931">
    <property type="component" value="Chromosome"/>
</dbReference>
<dbReference type="GO" id="GO:0005886">
    <property type="term" value="C:plasma membrane"/>
    <property type="evidence" value="ECO:0007669"/>
    <property type="project" value="UniProtKB-SubCell"/>
</dbReference>
<dbReference type="GO" id="GO:0033178">
    <property type="term" value="C:proton-transporting two-sector ATPase complex, catalytic domain"/>
    <property type="evidence" value="ECO:0007669"/>
    <property type="project" value="InterPro"/>
</dbReference>
<dbReference type="GO" id="GO:0005524">
    <property type="term" value="F:ATP binding"/>
    <property type="evidence" value="ECO:0007669"/>
    <property type="project" value="UniProtKB-UniRule"/>
</dbReference>
<dbReference type="GO" id="GO:0046933">
    <property type="term" value="F:proton-transporting ATP synthase activity, rotational mechanism"/>
    <property type="evidence" value="ECO:0007669"/>
    <property type="project" value="UniProtKB-UniRule"/>
</dbReference>
<dbReference type="GO" id="GO:0046961">
    <property type="term" value="F:proton-transporting ATPase activity, rotational mechanism"/>
    <property type="evidence" value="ECO:0007669"/>
    <property type="project" value="InterPro"/>
</dbReference>
<dbReference type="GO" id="GO:0042777">
    <property type="term" value="P:proton motive force-driven plasma membrane ATP synthesis"/>
    <property type="evidence" value="ECO:0007669"/>
    <property type="project" value="UniProtKB-UniRule"/>
</dbReference>
<dbReference type="CDD" id="cd18111">
    <property type="entry name" value="ATP-synt_V_A-type_alpha_C"/>
    <property type="match status" value="1"/>
</dbReference>
<dbReference type="CDD" id="cd18119">
    <property type="entry name" value="ATP-synt_V_A-type_alpha_N"/>
    <property type="match status" value="1"/>
</dbReference>
<dbReference type="CDD" id="cd01134">
    <property type="entry name" value="V_A-ATPase_A"/>
    <property type="match status" value="1"/>
</dbReference>
<dbReference type="FunFam" id="1.10.1140.10:FF:000002">
    <property type="entry name" value="V-type proton ATPase catalytic subunit A"/>
    <property type="match status" value="1"/>
</dbReference>
<dbReference type="FunFam" id="2.40.50.100:FF:000008">
    <property type="entry name" value="V-type proton ATPase catalytic subunit A"/>
    <property type="match status" value="1"/>
</dbReference>
<dbReference type="Gene3D" id="2.40.30.20">
    <property type="match status" value="1"/>
</dbReference>
<dbReference type="Gene3D" id="2.40.50.100">
    <property type="match status" value="1"/>
</dbReference>
<dbReference type="Gene3D" id="1.10.1140.10">
    <property type="entry name" value="Bovine Mitochondrial F1-atpase, Atp Synthase Beta Chain, Chain D, domain 3"/>
    <property type="match status" value="1"/>
</dbReference>
<dbReference type="Gene3D" id="3.40.50.300">
    <property type="entry name" value="P-loop containing nucleotide triphosphate hydrolases"/>
    <property type="match status" value="1"/>
</dbReference>
<dbReference type="HAMAP" id="MF_00309">
    <property type="entry name" value="ATP_synth_A_arch"/>
    <property type="match status" value="1"/>
</dbReference>
<dbReference type="InterPro" id="IPR055190">
    <property type="entry name" value="ATP-synt_VA_C"/>
</dbReference>
<dbReference type="InterPro" id="IPR031686">
    <property type="entry name" value="ATP-synth_a_Xtn"/>
</dbReference>
<dbReference type="InterPro" id="IPR023366">
    <property type="entry name" value="ATP_synth_asu-like_sf"/>
</dbReference>
<dbReference type="InterPro" id="IPR005726">
    <property type="entry name" value="ATP_synth_asu_arc"/>
</dbReference>
<dbReference type="InterPro" id="IPR020003">
    <property type="entry name" value="ATPase_a/bsu_AS"/>
</dbReference>
<dbReference type="InterPro" id="IPR004100">
    <property type="entry name" value="ATPase_F1/V1/A1_a/bsu_N"/>
</dbReference>
<dbReference type="InterPro" id="IPR036121">
    <property type="entry name" value="ATPase_F1/V1/A1_a/bsu_N_sf"/>
</dbReference>
<dbReference type="InterPro" id="IPR000194">
    <property type="entry name" value="ATPase_F1/V1/A1_a/bsu_nucl-bd"/>
</dbReference>
<dbReference type="InterPro" id="IPR024034">
    <property type="entry name" value="ATPase_F1/V1_b/a_C"/>
</dbReference>
<dbReference type="InterPro" id="IPR027417">
    <property type="entry name" value="P-loop_NTPase"/>
</dbReference>
<dbReference type="InterPro" id="IPR022878">
    <property type="entry name" value="V-ATPase_asu"/>
</dbReference>
<dbReference type="NCBIfam" id="TIGR01043">
    <property type="entry name" value="ATP_syn_A_arch"/>
    <property type="match status" value="1"/>
</dbReference>
<dbReference type="NCBIfam" id="NF003220">
    <property type="entry name" value="PRK04192.1"/>
    <property type="match status" value="1"/>
</dbReference>
<dbReference type="PANTHER" id="PTHR43607:SF1">
    <property type="entry name" value="H(+)-TRANSPORTING TWO-SECTOR ATPASE"/>
    <property type="match status" value="1"/>
</dbReference>
<dbReference type="PANTHER" id="PTHR43607">
    <property type="entry name" value="V-TYPE PROTON ATPASE CATALYTIC SUBUNIT A"/>
    <property type="match status" value="1"/>
</dbReference>
<dbReference type="Pfam" id="PF00006">
    <property type="entry name" value="ATP-synt_ab"/>
    <property type="match status" value="1"/>
</dbReference>
<dbReference type="Pfam" id="PF02874">
    <property type="entry name" value="ATP-synt_ab_N"/>
    <property type="match status" value="1"/>
</dbReference>
<dbReference type="Pfam" id="PF16886">
    <property type="entry name" value="ATP-synt_ab_Xtn"/>
    <property type="match status" value="1"/>
</dbReference>
<dbReference type="Pfam" id="PF22919">
    <property type="entry name" value="ATP-synt_VA_C"/>
    <property type="match status" value="1"/>
</dbReference>
<dbReference type="SUPFAM" id="SSF47917">
    <property type="entry name" value="C-terminal domain of alpha and beta subunits of F1 ATP synthase"/>
    <property type="match status" value="1"/>
</dbReference>
<dbReference type="SUPFAM" id="SSF50615">
    <property type="entry name" value="N-terminal domain of alpha and beta subunits of F1 ATP synthase"/>
    <property type="match status" value="1"/>
</dbReference>
<dbReference type="SUPFAM" id="SSF52540">
    <property type="entry name" value="P-loop containing nucleoside triphosphate hydrolases"/>
    <property type="match status" value="1"/>
</dbReference>
<dbReference type="PROSITE" id="PS00152">
    <property type="entry name" value="ATPASE_ALPHA_BETA"/>
    <property type="match status" value="1"/>
</dbReference>
<feature type="chain" id="PRO_0000322481" description="A-type ATP synthase subunit A">
    <location>
        <begin position="1"/>
        <end position="585"/>
    </location>
</feature>
<feature type="binding site" evidence="1">
    <location>
        <begin position="232"/>
        <end position="239"/>
    </location>
    <ligand>
        <name>ATP</name>
        <dbReference type="ChEBI" id="CHEBI:30616"/>
    </ligand>
</feature>